<sequence>MSQILTGRQAEELHKSLIAYLSSINASQSVTTLREELQIGDNFTDAACKKYEGFLEKKWISVVRLQKRILDLESKIASLQAELDSAPTITSRANRDPKSWLPGTSPTHTLGSHRGAITCVAFHPVFSSLASGSEDYSIKIWDWELGELERTLKGHTRTVTGLDFGGQKGRTLLASCSNDLTIKLWDPSNDYANIRTLFGHDHSVSSVRFLIPGGNILISASRDTTLRMWDTSTGFCVKTIHTQGDWVRDVFPSFDGKWLVSGGRDQAATIWEVSSGEARASLLGHENYIECCTFAPPSSYGYLATLAGLKKPPSTNSSAEFVATGARDKTVKLWDSRGSLIKTLIGHNNWVRGLVFHPGGKYLFSVGDDKTIRCWDLSQEGKLVKTLEGAHEHFVSCIQWAPDPANLVQSSVAERPEGNKGTEHGTTGFRCVIATGSADSCVRVFM</sequence>
<dbReference type="EMBL" id="CH476619">
    <property type="protein sequence ID" value="EEP82812.1"/>
    <property type="molecule type" value="Genomic_DNA"/>
</dbReference>
<dbReference type="RefSeq" id="XP_002582904.1">
    <property type="nucleotide sequence ID" value="XM_002582858.1"/>
</dbReference>
<dbReference type="SMR" id="C4JZS6"/>
<dbReference type="FunCoup" id="C4JZS6">
    <property type="interactions" value="42"/>
</dbReference>
<dbReference type="STRING" id="336963.C4JZS6"/>
<dbReference type="GeneID" id="8439693"/>
<dbReference type="KEGG" id="ure:UREG_07677"/>
<dbReference type="VEuPathDB" id="FungiDB:UREG_07677"/>
<dbReference type="eggNOG" id="KOG0295">
    <property type="taxonomic scope" value="Eukaryota"/>
</dbReference>
<dbReference type="HOGENOM" id="CLU_000288_57_15_1"/>
<dbReference type="InParanoid" id="C4JZS6"/>
<dbReference type="OMA" id="CIRWAPP"/>
<dbReference type="OrthoDB" id="10264588at2759"/>
<dbReference type="Proteomes" id="UP000002058">
    <property type="component" value="Unassembled WGS sequence"/>
</dbReference>
<dbReference type="GO" id="GO:0005737">
    <property type="term" value="C:cytoplasm"/>
    <property type="evidence" value="ECO:0007669"/>
    <property type="project" value="UniProtKB-UniRule"/>
</dbReference>
<dbReference type="GO" id="GO:0005874">
    <property type="term" value="C:microtubule"/>
    <property type="evidence" value="ECO:0007669"/>
    <property type="project" value="UniProtKB-KW"/>
</dbReference>
<dbReference type="GO" id="GO:0005875">
    <property type="term" value="C:microtubule associated complex"/>
    <property type="evidence" value="ECO:0007669"/>
    <property type="project" value="UniProtKB-UniRule"/>
</dbReference>
<dbReference type="GO" id="GO:0000922">
    <property type="term" value="C:spindle pole"/>
    <property type="evidence" value="ECO:0007669"/>
    <property type="project" value="UniProtKB-SubCell"/>
</dbReference>
<dbReference type="GO" id="GO:0070840">
    <property type="term" value="F:dynein complex binding"/>
    <property type="evidence" value="ECO:0007669"/>
    <property type="project" value="UniProtKB-UniRule"/>
</dbReference>
<dbReference type="GO" id="GO:0051301">
    <property type="term" value="P:cell division"/>
    <property type="evidence" value="ECO:0007669"/>
    <property type="project" value="UniProtKB-KW"/>
</dbReference>
<dbReference type="GO" id="GO:0000132">
    <property type="term" value="P:establishment of mitotic spindle orientation"/>
    <property type="evidence" value="ECO:0007669"/>
    <property type="project" value="UniProtKB-UniRule"/>
</dbReference>
<dbReference type="GO" id="GO:0051012">
    <property type="term" value="P:microtubule sliding"/>
    <property type="evidence" value="ECO:0007669"/>
    <property type="project" value="UniProtKB-UniRule"/>
</dbReference>
<dbReference type="CDD" id="cd00200">
    <property type="entry name" value="WD40"/>
    <property type="match status" value="1"/>
</dbReference>
<dbReference type="FunFam" id="2.130.10.10:FF:000342">
    <property type="entry name" value="Nuclear distribution protein PAC1"/>
    <property type="match status" value="1"/>
</dbReference>
<dbReference type="FunFam" id="1.20.960.30:FF:000002">
    <property type="entry name" value="Platelet-activating factor acetylhydrolase ib"/>
    <property type="match status" value="1"/>
</dbReference>
<dbReference type="Gene3D" id="1.20.960.30">
    <property type="match status" value="1"/>
</dbReference>
<dbReference type="Gene3D" id="2.130.10.10">
    <property type="entry name" value="YVTN repeat-like/Quinoprotein amine dehydrogenase"/>
    <property type="match status" value="1"/>
</dbReference>
<dbReference type="HAMAP" id="MF_03141">
    <property type="entry name" value="lis1"/>
    <property type="match status" value="1"/>
</dbReference>
<dbReference type="InterPro" id="IPR017252">
    <property type="entry name" value="Dynein_regulator_LIS1"/>
</dbReference>
<dbReference type="InterPro" id="IPR020472">
    <property type="entry name" value="G-protein_beta_WD-40_rep"/>
</dbReference>
<dbReference type="InterPro" id="IPR037190">
    <property type="entry name" value="LIS1_N"/>
</dbReference>
<dbReference type="InterPro" id="IPR056795">
    <property type="entry name" value="PAC1-like_LisH-like_dom"/>
</dbReference>
<dbReference type="InterPro" id="IPR015943">
    <property type="entry name" value="WD40/YVTN_repeat-like_dom_sf"/>
</dbReference>
<dbReference type="InterPro" id="IPR019775">
    <property type="entry name" value="WD40_repeat_CS"/>
</dbReference>
<dbReference type="InterPro" id="IPR036322">
    <property type="entry name" value="WD40_repeat_dom_sf"/>
</dbReference>
<dbReference type="InterPro" id="IPR001680">
    <property type="entry name" value="WD40_rpt"/>
</dbReference>
<dbReference type="PANTHER" id="PTHR19879">
    <property type="entry name" value="TRANSCRIPTION INITIATION FACTOR TFIID"/>
    <property type="match status" value="1"/>
</dbReference>
<dbReference type="PANTHER" id="PTHR19879:SF9">
    <property type="entry name" value="TRANSCRIPTION INITIATION FACTOR TFIID SUBUNIT 5"/>
    <property type="match status" value="1"/>
</dbReference>
<dbReference type="Pfam" id="PF24951">
    <property type="entry name" value="LisH_PAC1"/>
    <property type="match status" value="1"/>
</dbReference>
<dbReference type="Pfam" id="PF00400">
    <property type="entry name" value="WD40"/>
    <property type="match status" value="6"/>
</dbReference>
<dbReference type="PIRSF" id="PIRSF037647">
    <property type="entry name" value="Dynein_regulator_Lis1"/>
    <property type="match status" value="1"/>
</dbReference>
<dbReference type="PRINTS" id="PR00320">
    <property type="entry name" value="GPROTEINBRPT"/>
</dbReference>
<dbReference type="SMART" id="SM00320">
    <property type="entry name" value="WD40"/>
    <property type="match status" value="7"/>
</dbReference>
<dbReference type="SUPFAM" id="SSF109925">
    <property type="entry name" value="Lissencephaly-1 protein (Lis-1, PAF-AH alpha) N-terminal domain"/>
    <property type="match status" value="1"/>
</dbReference>
<dbReference type="SUPFAM" id="SSF50978">
    <property type="entry name" value="WD40 repeat-like"/>
    <property type="match status" value="1"/>
</dbReference>
<dbReference type="PROSITE" id="PS00678">
    <property type="entry name" value="WD_REPEATS_1"/>
    <property type="match status" value="3"/>
</dbReference>
<dbReference type="PROSITE" id="PS50082">
    <property type="entry name" value="WD_REPEATS_2"/>
    <property type="match status" value="6"/>
</dbReference>
<dbReference type="PROSITE" id="PS50294">
    <property type="entry name" value="WD_REPEATS_REGION"/>
    <property type="match status" value="1"/>
</dbReference>
<gene>
    <name evidence="1" type="primary">PAC1-1</name>
    <name evidence="1" type="synonym">LIS1-1</name>
    <name type="ORF">UREG_07677</name>
</gene>
<organism>
    <name type="scientific">Uncinocarpus reesii (strain UAMH 1704)</name>
    <dbReference type="NCBI Taxonomy" id="336963"/>
    <lineage>
        <taxon>Eukaryota</taxon>
        <taxon>Fungi</taxon>
        <taxon>Dikarya</taxon>
        <taxon>Ascomycota</taxon>
        <taxon>Pezizomycotina</taxon>
        <taxon>Eurotiomycetes</taxon>
        <taxon>Eurotiomycetidae</taxon>
        <taxon>Onygenales</taxon>
        <taxon>Onygenaceae</taxon>
        <taxon>Uncinocarpus</taxon>
    </lineage>
</organism>
<comment type="function">
    <text evidence="1">Positively regulates the activity of the minus-end directed microtubule motor protein dynein. May enhance dynein-mediated microtubule sliding by targeting dynein to the microtubule plus end. Required for nuclear migration during vegetative growth as well as development. Required for retrograde early endosome (EE) transport from the hyphal tip. Required for localization of dynein to the mitotic spindle poles. Recruits additional proteins to the dynein complex at SPBs.</text>
</comment>
<comment type="subunit">
    <text evidence="1">Self-associates. Interacts with NDL1 and dynein.</text>
</comment>
<comment type="subcellular location">
    <subcellularLocation>
        <location evidence="1">Cytoplasm</location>
        <location evidence="1">Cytoskeleton</location>
    </subcellularLocation>
    <subcellularLocation>
        <location evidence="1">Cytoplasm</location>
        <location evidence="1">Cytoskeleton</location>
        <location evidence="1">Spindle pole</location>
    </subcellularLocation>
    <text evidence="1">Localizes to the plus ends of microtubules at the hyphal tip and the mitotic spindle poles.</text>
</comment>
<comment type="domain">
    <text evidence="1">Dimerization mediated by the LisH domain may be required to activate dynein.</text>
</comment>
<comment type="similarity">
    <text evidence="1">Belongs to the WD repeat LIS1/nudF family.</text>
</comment>
<protein>
    <recommendedName>
        <fullName evidence="1">Nuclear distribution protein PAC1-1</fullName>
    </recommendedName>
    <alternativeName>
        <fullName evidence="1">Lissencephaly-1 homolog 1</fullName>
        <shortName evidence="1">LIS-1 1</shortName>
    </alternativeName>
    <alternativeName>
        <fullName evidence="1">nudF homolog 1</fullName>
    </alternativeName>
</protein>
<keyword id="KW-0131">Cell cycle</keyword>
<keyword id="KW-0132">Cell division</keyword>
<keyword id="KW-0175">Coiled coil</keyword>
<keyword id="KW-0963">Cytoplasm</keyword>
<keyword id="KW-0206">Cytoskeleton</keyword>
<keyword id="KW-0493">Microtubule</keyword>
<keyword id="KW-0498">Mitosis</keyword>
<keyword id="KW-1185">Reference proteome</keyword>
<keyword id="KW-0677">Repeat</keyword>
<keyword id="KW-0813">Transport</keyword>
<keyword id="KW-0853">WD repeat</keyword>
<evidence type="ECO:0000255" key="1">
    <source>
        <dbReference type="HAMAP-Rule" id="MF_03141"/>
    </source>
</evidence>
<reference key="1">
    <citation type="journal article" date="2009" name="Genome Res.">
        <title>Comparative genomic analyses of the human fungal pathogens Coccidioides and their relatives.</title>
        <authorList>
            <person name="Sharpton T.J."/>
            <person name="Stajich J.E."/>
            <person name="Rounsley S.D."/>
            <person name="Gardner M.J."/>
            <person name="Wortman J.R."/>
            <person name="Jordar V.S."/>
            <person name="Maiti R."/>
            <person name="Kodira C.D."/>
            <person name="Neafsey D.E."/>
            <person name="Zeng Q."/>
            <person name="Hung C.-Y."/>
            <person name="McMahan C."/>
            <person name="Muszewska A."/>
            <person name="Grynberg M."/>
            <person name="Mandel M.A."/>
            <person name="Kellner E.M."/>
            <person name="Barker B.M."/>
            <person name="Galgiani J.N."/>
            <person name="Orbach M.J."/>
            <person name="Kirkland T.N."/>
            <person name="Cole G.T."/>
            <person name="Henn M.R."/>
            <person name="Birren B.W."/>
            <person name="Taylor J.W."/>
        </authorList>
    </citation>
    <scope>NUCLEOTIDE SEQUENCE [LARGE SCALE GENOMIC DNA]</scope>
    <source>
        <strain>UAMH 1704</strain>
    </source>
</reference>
<name>LIS11_UNCRE</name>
<feature type="chain" id="PRO_0000405111" description="Nuclear distribution protein PAC1-1">
    <location>
        <begin position="1"/>
        <end position="446"/>
    </location>
</feature>
<feature type="domain" description="LisH" evidence="1">
    <location>
        <begin position="9"/>
        <end position="41"/>
    </location>
</feature>
<feature type="repeat" description="WD 1">
    <location>
        <begin position="112"/>
        <end position="153"/>
    </location>
</feature>
<feature type="repeat" description="WD 2">
    <location>
        <begin position="155"/>
        <end position="195"/>
    </location>
</feature>
<feature type="repeat" description="WD 3">
    <location>
        <begin position="199"/>
        <end position="239"/>
    </location>
</feature>
<feature type="repeat" description="WD 4">
    <location>
        <begin position="242"/>
        <end position="281"/>
    </location>
</feature>
<feature type="repeat" description="WD 5">
    <location>
        <begin position="284"/>
        <end position="344"/>
    </location>
</feature>
<feature type="repeat" description="WD 6">
    <location>
        <begin position="346"/>
        <end position="385"/>
    </location>
</feature>
<feature type="repeat" description="WD 7">
    <location>
        <begin position="390"/>
        <end position="430"/>
    </location>
</feature>
<feature type="repeat" description="WD 8">
    <location>
        <begin position="432"/>
        <end position="446"/>
    </location>
</feature>
<feature type="coiled-coil region" evidence="1">
    <location>
        <begin position="60"/>
        <end position="86"/>
    </location>
</feature>
<accession>C4JZS6</accession>
<proteinExistence type="inferred from homology"/>